<accession>C1DPN1</accession>
<feature type="chain" id="PRO_1000216160" description="YcgL domain-containing protein Avin_32960">
    <location>
        <begin position="1"/>
        <end position="97"/>
    </location>
</feature>
<feature type="domain" description="YcgL" evidence="1">
    <location>
        <begin position="3"/>
        <end position="87"/>
    </location>
</feature>
<gene>
    <name type="ordered locus">Avin_32960</name>
</gene>
<organism>
    <name type="scientific">Azotobacter vinelandii (strain DJ / ATCC BAA-1303)</name>
    <dbReference type="NCBI Taxonomy" id="322710"/>
    <lineage>
        <taxon>Bacteria</taxon>
        <taxon>Pseudomonadati</taxon>
        <taxon>Pseudomonadota</taxon>
        <taxon>Gammaproteobacteria</taxon>
        <taxon>Pseudomonadales</taxon>
        <taxon>Pseudomonadaceae</taxon>
        <taxon>Azotobacter</taxon>
    </lineage>
</organism>
<name>Y3296_AZOVD</name>
<proteinExistence type="inferred from homology"/>
<evidence type="ECO:0000255" key="1">
    <source>
        <dbReference type="HAMAP-Rule" id="MF_01866"/>
    </source>
</evidence>
<protein>
    <recommendedName>
        <fullName evidence="1">YcgL domain-containing protein Avin_32960</fullName>
    </recommendedName>
</protein>
<dbReference type="EMBL" id="CP001157">
    <property type="protein sequence ID" value="ACO79452.1"/>
    <property type="molecule type" value="Genomic_DNA"/>
</dbReference>
<dbReference type="RefSeq" id="WP_012701836.1">
    <property type="nucleotide sequence ID" value="NC_012560.1"/>
</dbReference>
<dbReference type="SMR" id="C1DPN1"/>
<dbReference type="STRING" id="322710.Avin_32960"/>
<dbReference type="EnsemblBacteria" id="ACO79452">
    <property type="protein sequence ID" value="ACO79452"/>
    <property type="gene ID" value="Avin_32960"/>
</dbReference>
<dbReference type="GeneID" id="88186337"/>
<dbReference type="KEGG" id="avn:Avin_32960"/>
<dbReference type="eggNOG" id="COG3100">
    <property type="taxonomic scope" value="Bacteria"/>
</dbReference>
<dbReference type="HOGENOM" id="CLU_155118_2_0_6"/>
<dbReference type="OrthoDB" id="7062382at2"/>
<dbReference type="Proteomes" id="UP000002424">
    <property type="component" value="Chromosome"/>
</dbReference>
<dbReference type="Gene3D" id="3.10.510.20">
    <property type="entry name" value="YcgL domain"/>
    <property type="match status" value="1"/>
</dbReference>
<dbReference type="HAMAP" id="MF_01866">
    <property type="entry name" value="UPF0745"/>
    <property type="match status" value="1"/>
</dbReference>
<dbReference type="InterPro" id="IPR038068">
    <property type="entry name" value="YcgL-like_sf"/>
</dbReference>
<dbReference type="InterPro" id="IPR027354">
    <property type="entry name" value="YcgL_dom"/>
</dbReference>
<dbReference type="PANTHER" id="PTHR38109">
    <property type="entry name" value="PROTEIN YCGL"/>
    <property type="match status" value="1"/>
</dbReference>
<dbReference type="PANTHER" id="PTHR38109:SF1">
    <property type="entry name" value="PROTEIN YCGL"/>
    <property type="match status" value="1"/>
</dbReference>
<dbReference type="Pfam" id="PF05166">
    <property type="entry name" value="YcgL"/>
    <property type="match status" value="1"/>
</dbReference>
<dbReference type="SUPFAM" id="SSF160191">
    <property type="entry name" value="YcgL-like"/>
    <property type="match status" value="1"/>
</dbReference>
<dbReference type="PROSITE" id="PS51648">
    <property type="entry name" value="YCGL"/>
    <property type="match status" value="1"/>
</dbReference>
<reference key="1">
    <citation type="journal article" date="2009" name="J. Bacteriol.">
        <title>Genome sequence of Azotobacter vinelandii, an obligate aerobe specialized to support diverse anaerobic metabolic processes.</title>
        <authorList>
            <person name="Setubal J.C."/>
            <person name="Dos Santos P."/>
            <person name="Goldman B.S."/>
            <person name="Ertesvaag H."/>
            <person name="Espin G."/>
            <person name="Rubio L.M."/>
            <person name="Valla S."/>
            <person name="Almeida N.F."/>
            <person name="Balasubramanian D."/>
            <person name="Cromes L."/>
            <person name="Curatti L."/>
            <person name="Du Z."/>
            <person name="Godsy E."/>
            <person name="Goodner B."/>
            <person name="Hellner-Burris K."/>
            <person name="Hernandez J.A."/>
            <person name="Houmiel K."/>
            <person name="Imperial J."/>
            <person name="Kennedy C."/>
            <person name="Larson T.J."/>
            <person name="Latreille P."/>
            <person name="Ligon L.S."/>
            <person name="Lu J."/>
            <person name="Maerk M."/>
            <person name="Miller N.M."/>
            <person name="Norton S."/>
            <person name="O'Carroll I.P."/>
            <person name="Paulsen I."/>
            <person name="Raulfs E.C."/>
            <person name="Roemer R."/>
            <person name="Rosser J."/>
            <person name="Segura D."/>
            <person name="Slater S."/>
            <person name="Stricklin S.L."/>
            <person name="Studholme D.J."/>
            <person name="Sun J."/>
            <person name="Viana C.J."/>
            <person name="Wallin E."/>
            <person name="Wang B."/>
            <person name="Wheeler C."/>
            <person name="Zhu H."/>
            <person name="Dean D.R."/>
            <person name="Dixon R."/>
            <person name="Wood D."/>
        </authorList>
    </citation>
    <scope>NUCLEOTIDE SEQUENCE [LARGE SCALE GENOMIC DNA]</scope>
    <source>
        <strain>DJ / ATCC BAA-1303</strain>
    </source>
</reference>
<sequence length="97" mass="11405">MKCICSIYKSPRRREMYLYVAKKDALSRVPEGLLAAFGTPQHAFDLVLMPERRLAREDIHKVLENLEKQGYHLQMPPPEEEYVEHLPDELLRMNDPV</sequence>